<organism>
    <name type="scientific">Rattus norvegicus</name>
    <name type="common">Rat</name>
    <dbReference type="NCBI Taxonomy" id="10116"/>
    <lineage>
        <taxon>Eukaryota</taxon>
        <taxon>Metazoa</taxon>
        <taxon>Chordata</taxon>
        <taxon>Craniata</taxon>
        <taxon>Vertebrata</taxon>
        <taxon>Euteleostomi</taxon>
        <taxon>Mammalia</taxon>
        <taxon>Eutheria</taxon>
        <taxon>Euarchontoglires</taxon>
        <taxon>Glires</taxon>
        <taxon>Rodentia</taxon>
        <taxon>Myomorpha</taxon>
        <taxon>Muroidea</taxon>
        <taxon>Muridae</taxon>
        <taxon>Murinae</taxon>
        <taxon>Rattus</taxon>
    </lineage>
</organism>
<keyword id="KW-0256">Endoplasmic reticulum</keyword>
<keyword id="KW-0349">Heme</keyword>
<keyword id="KW-0408">Iron</keyword>
<keyword id="KW-0443">Lipid metabolism</keyword>
<keyword id="KW-0472">Membrane</keyword>
<keyword id="KW-0479">Metal-binding</keyword>
<keyword id="KW-0492">Microsome</keyword>
<keyword id="KW-0503">Monooxygenase</keyword>
<keyword id="KW-0560">Oxidoreductase</keyword>
<keyword id="KW-1185">Reference proteome</keyword>
<keyword id="KW-0812">Transmembrane</keyword>
<keyword id="KW-1133">Transmembrane helix</keyword>
<gene>
    <name evidence="3" type="primary">Cyp4f3</name>
    <name evidence="7" type="synonym">Cyp4f18</name>
</gene>
<proteinExistence type="evidence at transcript level"/>
<protein>
    <recommendedName>
        <fullName evidence="3">Cytochrome P450 4F3</fullName>
    </recommendedName>
    <alternativeName>
        <fullName>CYPIVF3</fullName>
    </alternativeName>
    <alternativeName>
        <fullName evidence="4">Leukotriene-B(4) omega-1/omega-2 hydroxylase</fullName>
    </alternativeName>
</protein>
<comment type="function">
    <text evidence="4">A cytochrome P450 monooxygenase involved in the metabolism of the pro-inflammatory lipid mediator leukotriene B4 (LTB4). Hydroxylates at the omega-1 and omega-2 positions LTB4. This oxidation step leads to LTB4 inactivation, which is postulated to be a crucial part of the resolution of inflammation. Mechanistically, uses molecular oxygen inserting one oxygen atom into a substrate, and reducing the second into a water molecule, with two electrons provided by NADPH via cytochrome P450 reductase (CPR; NADPH-ferrihemoprotein reductase).</text>
</comment>
<comment type="catalytic activity">
    <reaction evidence="4">
        <text>leukotriene B4 + reduced [NADPH--hemoprotein reductase] + O2 = 18-hydroxy-leukotriene B4 + oxidized [NADPH--hemoprotein reductase] + H2O + H(+)</text>
        <dbReference type="Rhea" id="RHEA:53440"/>
        <dbReference type="Rhea" id="RHEA-COMP:11964"/>
        <dbReference type="Rhea" id="RHEA-COMP:11965"/>
        <dbReference type="ChEBI" id="CHEBI:15377"/>
        <dbReference type="ChEBI" id="CHEBI:15378"/>
        <dbReference type="ChEBI" id="CHEBI:15379"/>
        <dbReference type="ChEBI" id="CHEBI:57461"/>
        <dbReference type="ChEBI" id="CHEBI:57618"/>
        <dbReference type="ChEBI" id="CHEBI:58210"/>
        <dbReference type="ChEBI" id="CHEBI:137391"/>
    </reaction>
    <physiologicalReaction direction="left-to-right" evidence="4">
        <dbReference type="Rhea" id="RHEA:53441"/>
    </physiologicalReaction>
</comment>
<comment type="catalytic activity">
    <reaction evidence="4">
        <text>leukotriene B4 + reduced [NADPH--hemoprotein reductase] + O2 = 19-hydroxy-leukotriene B4 + oxidized [NADPH--hemoprotein reductase] + H2O + H(+)</text>
        <dbReference type="Rhea" id="RHEA:53436"/>
        <dbReference type="Rhea" id="RHEA-COMP:11964"/>
        <dbReference type="Rhea" id="RHEA-COMP:11965"/>
        <dbReference type="ChEBI" id="CHEBI:15377"/>
        <dbReference type="ChEBI" id="CHEBI:15378"/>
        <dbReference type="ChEBI" id="CHEBI:15379"/>
        <dbReference type="ChEBI" id="CHEBI:57461"/>
        <dbReference type="ChEBI" id="CHEBI:57618"/>
        <dbReference type="ChEBI" id="CHEBI:58210"/>
        <dbReference type="ChEBI" id="CHEBI:137390"/>
    </reaction>
    <physiologicalReaction direction="left-to-right" evidence="4">
        <dbReference type="Rhea" id="RHEA:53437"/>
    </physiologicalReaction>
</comment>
<comment type="cofactor">
    <cofactor evidence="2">
        <name>heme</name>
        <dbReference type="ChEBI" id="CHEBI:30413"/>
    </cofactor>
</comment>
<comment type="pathway">
    <text evidence="4">Lipid metabolism; leukotriene B4 degradation.</text>
</comment>
<comment type="subcellular location">
    <subcellularLocation>
        <location evidence="4">Endoplasmic reticulum membrane</location>
        <topology evidence="6">Single-pass membrane protein</topology>
    </subcellularLocation>
    <subcellularLocation>
        <location evidence="4">Microsome membrane</location>
        <topology evidence="6">Single-pass membrane protein</topology>
    </subcellularLocation>
</comment>
<comment type="similarity">
    <text evidence="5">Belongs to the cytochrome P450 family.</text>
</comment>
<evidence type="ECO:0000250" key="1">
    <source>
        <dbReference type="UniProtKB" id="P33274"/>
    </source>
</evidence>
<evidence type="ECO:0000250" key="2">
    <source>
        <dbReference type="UniProtKB" id="P51869"/>
    </source>
</evidence>
<evidence type="ECO:0000250" key="3">
    <source>
        <dbReference type="UniProtKB" id="Q08477"/>
    </source>
</evidence>
<evidence type="ECO:0000250" key="4">
    <source>
        <dbReference type="UniProtKB" id="Q99N16"/>
    </source>
</evidence>
<evidence type="ECO:0000255" key="5"/>
<evidence type="ECO:0000305" key="6"/>
<evidence type="ECO:0000312" key="7">
    <source>
        <dbReference type="RGD" id="1305261"/>
    </source>
</evidence>
<name>CP4F3_RAT</name>
<sequence>MPLLSLSWLGLGHTAASPWLLLLLVGASCLLAYILPQVYAVFENSRRLRRFPQPPPRNWLFGHLGLIQSSEEGLLYIQSLSRTFRDVCCWWVGPWHPVIRIFHPAFIKPVILAPASVAPKDRVFYRFLRPWLGDGLLLSTGDKWSRHRRMLTPAFHFNILKPYVKIFNDSTNIMHAKWQRLASQGSARLDMFEHISLMTLDSLQKCVFSFDSNCQEKPSEYITAILELSALVARRHQSLLLHVDLFYHLTRDGMRFRKACRLVHDFTDAVIRERRCTLPDQGGDDALKAKAKAKTLDFIDVLLLSKDEHGEALSDEDIRAEADTFMFGGHDTTASGLSWILYNLAKHPEYQERCRQEVRELLRDREPEEIEWDDLAQLPFLTMCIKESLRLHPPATAISRCCTQDIMLPDGRVIPKGVICRISIFGTHHNPAVWPDPEVYNPFRFDADNGKGRSPLAFIPFSAGPRNCIGQTFAMSEMKVALALTLLRFRVLPDDKEPRRKPELILRAEGGLWLRVEPLSAGAH</sequence>
<feature type="chain" id="PRO_0000238925" description="Cytochrome P450 4F3">
    <location>
        <begin position="1"/>
        <end position="524"/>
    </location>
</feature>
<feature type="transmembrane region" description="Helical" evidence="5">
    <location>
        <begin position="15"/>
        <end position="35"/>
    </location>
</feature>
<feature type="binding site" description="axial binding residue" evidence="1">
    <location>
        <position position="468"/>
    </location>
    <ligand>
        <name>heme</name>
        <dbReference type="ChEBI" id="CHEBI:30413"/>
    </ligand>
    <ligandPart>
        <name>Fe</name>
        <dbReference type="ChEBI" id="CHEBI:18248"/>
    </ligandPart>
</feature>
<accession>Q3MID2</accession>
<dbReference type="EMBL" id="BC101918">
    <property type="protein sequence ID" value="AAI01919.1"/>
    <property type="molecule type" value="mRNA"/>
</dbReference>
<dbReference type="RefSeq" id="NP_001028858.1">
    <property type="nucleotide sequence ID" value="NM_001033686.1"/>
</dbReference>
<dbReference type="SMR" id="Q3MID2"/>
<dbReference type="FunCoup" id="Q3MID2">
    <property type="interactions" value="44"/>
</dbReference>
<dbReference type="STRING" id="10116.ENSRNOP00000071973"/>
<dbReference type="iPTMnet" id="Q3MID2"/>
<dbReference type="PhosphoSitePlus" id="Q3MID2"/>
<dbReference type="PaxDb" id="10116-ENSRNOP00000021609"/>
<dbReference type="GeneID" id="290623"/>
<dbReference type="KEGG" id="rno:290623"/>
<dbReference type="UCSC" id="RGD:1305261">
    <property type="organism name" value="rat"/>
</dbReference>
<dbReference type="AGR" id="RGD:1305261"/>
<dbReference type="CTD" id="72054"/>
<dbReference type="RGD" id="1305261">
    <property type="gene designation" value="Cyp4f18"/>
</dbReference>
<dbReference type="eggNOG" id="KOG0157">
    <property type="taxonomic scope" value="Eukaryota"/>
</dbReference>
<dbReference type="InParanoid" id="Q3MID2"/>
<dbReference type="OrthoDB" id="1470350at2759"/>
<dbReference type="PhylomeDB" id="Q3MID2"/>
<dbReference type="Reactome" id="R-RNO-211935">
    <property type="pathway name" value="Fatty acids"/>
</dbReference>
<dbReference type="Reactome" id="R-RNO-211958">
    <property type="pathway name" value="Miscellaneous substrates"/>
</dbReference>
<dbReference type="Reactome" id="R-RNO-211979">
    <property type="pathway name" value="Eicosanoids"/>
</dbReference>
<dbReference type="Reactome" id="R-RNO-2142691">
    <property type="pathway name" value="Synthesis of Leukotrienes (LT) and Eoxins (EX)"/>
</dbReference>
<dbReference type="SABIO-RK" id="Q3MID2"/>
<dbReference type="UniPathway" id="UPA00883"/>
<dbReference type="PRO" id="PR:Q3MID2"/>
<dbReference type="Proteomes" id="UP000002494">
    <property type="component" value="Unplaced"/>
</dbReference>
<dbReference type="GO" id="GO:0005789">
    <property type="term" value="C:endoplasmic reticulum membrane"/>
    <property type="evidence" value="ECO:0007669"/>
    <property type="project" value="UniProtKB-SubCell"/>
</dbReference>
<dbReference type="GO" id="GO:0008391">
    <property type="term" value="F:arachidonate monooxygenase activity"/>
    <property type="evidence" value="ECO:0000318"/>
    <property type="project" value="GO_Central"/>
</dbReference>
<dbReference type="GO" id="GO:0020037">
    <property type="term" value="F:heme binding"/>
    <property type="evidence" value="ECO:0007669"/>
    <property type="project" value="InterPro"/>
</dbReference>
<dbReference type="GO" id="GO:0005506">
    <property type="term" value="F:iron ion binding"/>
    <property type="evidence" value="ECO:0007669"/>
    <property type="project" value="InterPro"/>
</dbReference>
<dbReference type="GO" id="GO:0050051">
    <property type="term" value="F:leukotriene-B4 20-monooxygenase activity"/>
    <property type="evidence" value="ECO:0000318"/>
    <property type="project" value="GO_Central"/>
</dbReference>
<dbReference type="GO" id="GO:0120319">
    <property type="term" value="F:long-chain fatty acid omega-1 hydroxylase activity"/>
    <property type="evidence" value="ECO:0000250"/>
    <property type="project" value="UniProtKB"/>
</dbReference>
<dbReference type="GO" id="GO:0102033">
    <property type="term" value="F:long-chain fatty acid omega-hydroxylase activity"/>
    <property type="evidence" value="ECO:0000266"/>
    <property type="project" value="RGD"/>
</dbReference>
<dbReference type="GO" id="GO:0140692">
    <property type="term" value="F:very long-chain fatty acid omega-hydroxylase activity"/>
    <property type="evidence" value="ECO:0000266"/>
    <property type="project" value="RGD"/>
</dbReference>
<dbReference type="GO" id="GO:0019369">
    <property type="term" value="P:arachidonate metabolic process"/>
    <property type="evidence" value="ECO:0000318"/>
    <property type="project" value="GO_Central"/>
</dbReference>
<dbReference type="GO" id="GO:0010430">
    <property type="term" value="P:fatty acid omega-oxidation"/>
    <property type="evidence" value="ECO:0000266"/>
    <property type="project" value="RGD"/>
</dbReference>
<dbReference type="GO" id="GO:0036101">
    <property type="term" value="P:leukotriene B4 catabolic process"/>
    <property type="evidence" value="ECO:0000318"/>
    <property type="project" value="GO_Central"/>
</dbReference>
<dbReference type="GO" id="GO:0036102">
    <property type="term" value="P:leukotriene B4 metabolic process"/>
    <property type="evidence" value="ECO:0000250"/>
    <property type="project" value="UniProtKB"/>
</dbReference>
<dbReference type="GO" id="GO:0097267">
    <property type="term" value="P:omega-hydroxylase P450 pathway"/>
    <property type="evidence" value="ECO:0000266"/>
    <property type="project" value="RGD"/>
</dbReference>
<dbReference type="CDD" id="cd20679">
    <property type="entry name" value="CYP4F"/>
    <property type="match status" value="1"/>
</dbReference>
<dbReference type="FunFam" id="1.10.630.10:FF:000005">
    <property type="entry name" value="cytochrome P450 4F22 isoform X2"/>
    <property type="match status" value="1"/>
</dbReference>
<dbReference type="Gene3D" id="1.10.630.10">
    <property type="entry name" value="Cytochrome P450"/>
    <property type="match status" value="1"/>
</dbReference>
<dbReference type="InterPro" id="IPR001128">
    <property type="entry name" value="Cyt_P450"/>
</dbReference>
<dbReference type="InterPro" id="IPR017972">
    <property type="entry name" value="Cyt_P450_CS"/>
</dbReference>
<dbReference type="InterPro" id="IPR002401">
    <property type="entry name" value="Cyt_P450_E_grp-I"/>
</dbReference>
<dbReference type="InterPro" id="IPR036396">
    <property type="entry name" value="Cyt_P450_sf"/>
</dbReference>
<dbReference type="InterPro" id="IPR050196">
    <property type="entry name" value="Cytochrome_P450_Monoox"/>
</dbReference>
<dbReference type="PANTHER" id="PTHR24291:SF202">
    <property type="entry name" value="CYTOCHROME P450 4F3"/>
    <property type="match status" value="1"/>
</dbReference>
<dbReference type="PANTHER" id="PTHR24291">
    <property type="entry name" value="CYTOCHROME P450 FAMILY 4"/>
    <property type="match status" value="1"/>
</dbReference>
<dbReference type="Pfam" id="PF00067">
    <property type="entry name" value="p450"/>
    <property type="match status" value="1"/>
</dbReference>
<dbReference type="PRINTS" id="PR00463">
    <property type="entry name" value="EP450I"/>
</dbReference>
<dbReference type="PRINTS" id="PR00385">
    <property type="entry name" value="P450"/>
</dbReference>
<dbReference type="SUPFAM" id="SSF48264">
    <property type="entry name" value="Cytochrome P450"/>
    <property type="match status" value="1"/>
</dbReference>
<dbReference type="PROSITE" id="PS00086">
    <property type="entry name" value="CYTOCHROME_P450"/>
    <property type="match status" value="1"/>
</dbReference>
<reference key="1">
    <citation type="journal article" date="2004" name="Genome Res.">
        <title>The status, quality, and expansion of the NIH full-length cDNA project: the Mammalian Gene Collection (MGC).</title>
        <authorList>
            <consortium name="The MGC Project Team"/>
        </authorList>
    </citation>
    <scope>NUCLEOTIDE SEQUENCE [LARGE SCALE MRNA]</scope>
    <source>
        <tissue>Prostate</tissue>
    </source>
</reference>